<keyword id="KW-1185">Reference proteome</keyword>
<keyword id="KW-0687">Ribonucleoprotein</keyword>
<keyword id="KW-0689">Ribosomal protein</keyword>
<proteinExistence type="inferred from homology"/>
<sequence length="101" mass="11414">MNQKIRIKLKSYDHNLVDKSSERIVRAVKATGAVVSGPIPLPTEKEIFTVLRSPHVNKKSRDQYQLCTYKRLVDIYSTSSKTVDALMKLELPSGVDVEIKV</sequence>
<feature type="chain" id="PRO_0000258545" description="Small ribosomal subunit protein uS10">
    <location>
        <begin position="1"/>
        <end position="101"/>
    </location>
</feature>
<dbReference type="EMBL" id="CP000383">
    <property type="protein sequence ID" value="ABG60403.1"/>
    <property type="molecule type" value="Genomic_DNA"/>
</dbReference>
<dbReference type="RefSeq" id="WP_011586512.1">
    <property type="nucleotide sequence ID" value="NZ_FPJX01000011.1"/>
</dbReference>
<dbReference type="SMR" id="Q11QB1"/>
<dbReference type="STRING" id="269798.CHU_3163"/>
<dbReference type="KEGG" id="chu:CHU_3163"/>
<dbReference type="eggNOG" id="COG0051">
    <property type="taxonomic scope" value="Bacteria"/>
</dbReference>
<dbReference type="HOGENOM" id="CLU_122625_1_3_10"/>
<dbReference type="OrthoDB" id="9804464at2"/>
<dbReference type="Proteomes" id="UP000001822">
    <property type="component" value="Chromosome"/>
</dbReference>
<dbReference type="GO" id="GO:1990904">
    <property type="term" value="C:ribonucleoprotein complex"/>
    <property type="evidence" value="ECO:0007669"/>
    <property type="project" value="UniProtKB-KW"/>
</dbReference>
<dbReference type="GO" id="GO:0005840">
    <property type="term" value="C:ribosome"/>
    <property type="evidence" value="ECO:0007669"/>
    <property type="project" value="UniProtKB-KW"/>
</dbReference>
<dbReference type="GO" id="GO:0003735">
    <property type="term" value="F:structural constituent of ribosome"/>
    <property type="evidence" value="ECO:0007669"/>
    <property type="project" value="InterPro"/>
</dbReference>
<dbReference type="GO" id="GO:0000049">
    <property type="term" value="F:tRNA binding"/>
    <property type="evidence" value="ECO:0007669"/>
    <property type="project" value="UniProtKB-UniRule"/>
</dbReference>
<dbReference type="GO" id="GO:0006412">
    <property type="term" value="P:translation"/>
    <property type="evidence" value="ECO:0007669"/>
    <property type="project" value="UniProtKB-UniRule"/>
</dbReference>
<dbReference type="FunFam" id="3.30.70.600:FF:000003">
    <property type="entry name" value="30S ribosomal protein S10"/>
    <property type="match status" value="1"/>
</dbReference>
<dbReference type="Gene3D" id="3.30.70.600">
    <property type="entry name" value="Ribosomal protein S10 domain"/>
    <property type="match status" value="1"/>
</dbReference>
<dbReference type="HAMAP" id="MF_00508">
    <property type="entry name" value="Ribosomal_uS10"/>
    <property type="match status" value="1"/>
</dbReference>
<dbReference type="InterPro" id="IPR001848">
    <property type="entry name" value="Ribosomal_uS10"/>
</dbReference>
<dbReference type="InterPro" id="IPR018268">
    <property type="entry name" value="Ribosomal_uS10_CS"/>
</dbReference>
<dbReference type="InterPro" id="IPR027486">
    <property type="entry name" value="Ribosomal_uS10_dom"/>
</dbReference>
<dbReference type="InterPro" id="IPR036838">
    <property type="entry name" value="Ribosomal_uS10_dom_sf"/>
</dbReference>
<dbReference type="NCBIfam" id="NF001861">
    <property type="entry name" value="PRK00596.1"/>
    <property type="match status" value="1"/>
</dbReference>
<dbReference type="NCBIfam" id="TIGR01049">
    <property type="entry name" value="rpsJ_bact"/>
    <property type="match status" value="1"/>
</dbReference>
<dbReference type="PANTHER" id="PTHR11700">
    <property type="entry name" value="30S RIBOSOMAL PROTEIN S10 FAMILY MEMBER"/>
    <property type="match status" value="1"/>
</dbReference>
<dbReference type="Pfam" id="PF00338">
    <property type="entry name" value="Ribosomal_S10"/>
    <property type="match status" value="1"/>
</dbReference>
<dbReference type="PRINTS" id="PR00971">
    <property type="entry name" value="RIBOSOMALS10"/>
</dbReference>
<dbReference type="SMART" id="SM01403">
    <property type="entry name" value="Ribosomal_S10"/>
    <property type="match status" value="1"/>
</dbReference>
<dbReference type="SUPFAM" id="SSF54999">
    <property type="entry name" value="Ribosomal protein S10"/>
    <property type="match status" value="1"/>
</dbReference>
<dbReference type="PROSITE" id="PS00361">
    <property type="entry name" value="RIBOSOMAL_S10"/>
    <property type="match status" value="1"/>
</dbReference>
<gene>
    <name evidence="1" type="primary">rpsJ</name>
    <name type="ordered locus">CHU_3163</name>
</gene>
<name>RS10_CYTH3</name>
<accession>Q11QB1</accession>
<protein>
    <recommendedName>
        <fullName evidence="1">Small ribosomal subunit protein uS10</fullName>
    </recommendedName>
    <alternativeName>
        <fullName evidence="2">30S ribosomal protein S10</fullName>
    </alternativeName>
</protein>
<evidence type="ECO:0000255" key="1">
    <source>
        <dbReference type="HAMAP-Rule" id="MF_00508"/>
    </source>
</evidence>
<evidence type="ECO:0000305" key="2"/>
<reference key="1">
    <citation type="journal article" date="2007" name="Appl. Environ. Microbiol.">
        <title>Genome sequence of the cellulolytic gliding bacterium Cytophaga hutchinsonii.</title>
        <authorList>
            <person name="Xie G."/>
            <person name="Bruce D.C."/>
            <person name="Challacombe J.F."/>
            <person name="Chertkov O."/>
            <person name="Detter J.C."/>
            <person name="Gilna P."/>
            <person name="Han C.S."/>
            <person name="Lucas S."/>
            <person name="Misra M."/>
            <person name="Myers G.L."/>
            <person name="Richardson P."/>
            <person name="Tapia R."/>
            <person name="Thayer N."/>
            <person name="Thompson L.S."/>
            <person name="Brettin T.S."/>
            <person name="Henrissat B."/>
            <person name="Wilson D.B."/>
            <person name="McBride M.J."/>
        </authorList>
    </citation>
    <scope>NUCLEOTIDE SEQUENCE [LARGE SCALE GENOMIC DNA]</scope>
    <source>
        <strain>ATCC 33406 / DSM 1761 / JCM 20678 / CIP 103989 / IAM 12607 / NBRC 15051 / NCIMB 9469 / D465</strain>
    </source>
</reference>
<comment type="function">
    <text evidence="1">Involved in the binding of tRNA to the ribosomes.</text>
</comment>
<comment type="subunit">
    <text evidence="1">Part of the 30S ribosomal subunit.</text>
</comment>
<comment type="similarity">
    <text evidence="1">Belongs to the universal ribosomal protein uS10 family.</text>
</comment>
<organism>
    <name type="scientific">Cytophaga hutchinsonii (strain ATCC 33406 / DSM 1761 / CIP 103989 / NBRC 15051 / NCIMB 9469 / D465)</name>
    <dbReference type="NCBI Taxonomy" id="269798"/>
    <lineage>
        <taxon>Bacteria</taxon>
        <taxon>Pseudomonadati</taxon>
        <taxon>Bacteroidota</taxon>
        <taxon>Cytophagia</taxon>
        <taxon>Cytophagales</taxon>
        <taxon>Cytophagaceae</taxon>
        <taxon>Cytophaga</taxon>
    </lineage>
</organism>